<proteinExistence type="inferred from homology"/>
<keyword id="KW-0678">Repressor</keyword>
<keyword id="KW-0687">Ribonucleoprotein</keyword>
<keyword id="KW-0689">Ribosomal protein</keyword>
<keyword id="KW-0694">RNA-binding</keyword>
<keyword id="KW-0699">rRNA-binding</keyword>
<keyword id="KW-0810">Translation regulation</keyword>
<keyword id="KW-0820">tRNA-binding</keyword>
<reference key="1">
    <citation type="journal article" date="2006" name="Genome Res.">
        <title>Skewed genomic variability in strains of the toxigenic bacterial pathogen, Clostridium perfringens.</title>
        <authorList>
            <person name="Myers G.S.A."/>
            <person name="Rasko D.A."/>
            <person name="Cheung J.K."/>
            <person name="Ravel J."/>
            <person name="Seshadri R."/>
            <person name="DeBoy R.T."/>
            <person name="Ren Q."/>
            <person name="Varga J."/>
            <person name="Awad M.M."/>
            <person name="Brinkac L.M."/>
            <person name="Daugherty S.C."/>
            <person name="Haft D.H."/>
            <person name="Dodson R.J."/>
            <person name="Madupu R."/>
            <person name="Nelson W.C."/>
            <person name="Rosovitz M.J."/>
            <person name="Sullivan S.A."/>
            <person name="Khouri H."/>
            <person name="Dimitrov G.I."/>
            <person name="Watkins K.L."/>
            <person name="Mulligan S."/>
            <person name="Benton J."/>
            <person name="Radune D."/>
            <person name="Fisher D.J."/>
            <person name="Atkins H.S."/>
            <person name="Hiscox T."/>
            <person name="Jost B.H."/>
            <person name="Billington S.J."/>
            <person name="Songer J.G."/>
            <person name="McClane B.A."/>
            <person name="Titball R.W."/>
            <person name="Rood J.I."/>
            <person name="Melville S.B."/>
            <person name="Paulsen I.T."/>
        </authorList>
    </citation>
    <scope>NUCLEOTIDE SEQUENCE [LARGE SCALE GENOMIC DNA]</scope>
    <source>
        <strain>ATCC 13124 / DSM 756 / JCM 1290 / NCIMB 6125 / NCTC 8237 / S 107 / Type A</strain>
    </source>
</reference>
<name>RL1_CLOP1</name>
<evidence type="ECO:0000255" key="1">
    <source>
        <dbReference type="HAMAP-Rule" id="MF_01318"/>
    </source>
</evidence>
<evidence type="ECO:0000305" key="2"/>
<sequence length="229" mass="24440">MGKKYIESSKLIDKNALYTPAEALELAVKTAKAKFDETIELHVRLGVDPRHADQQVRGAVVLPHGTGKDVKVLVFAKGEKAKEAEAAGADFVGADELVQKIQGENWFDYDVVVATPDMMGVVGRLGRVLGPKGLMPNPKSGTVTFDVANAIKEIKAGKVEYRVDKTAIVHCPIGKKSFGTEKLVENFKALMDALVKAKPAAAKGQYLKSVSVSATMGPGAKVNPAKVLD</sequence>
<accession>Q0TMN5</accession>
<feature type="chain" id="PRO_0000307994" description="Large ribosomal subunit protein uL1">
    <location>
        <begin position="1"/>
        <end position="229"/>
    </location>
</feature>
<protein>
    <recommendedName>
        <fullName evidence="1">Large ribosomal subunit protein uL1</fullName>
    </recommendedName>
    <alternativeName>
        <fullName evidence="2">50S ribosomal protein L1</fullName>
    </alternativeName>
</protein>
<dbReference type="EMBL" id="CP000246">
    <property type="protein sequence ID" value="ABG82429.1"/>
    <property type="molecule type" value="Genomic_DNA"/>
</dbReference>
<dbReference type="RefSeq" id="WP_003452172.1">
    <property type="nucleotide sequence ID" value="NC_008261.1"/>
</dbReference>
<dbReference type="SMR" id="Q0TMN5"/>
<dbReference type="STRING" id="195103.CPF_2725"/>
<dbReference type="PaxDb" id="195103-CPF_2725"/>
<dbReference type="GeneID" id="93000998"/>
<dbReference type="KEGG" id="cpf:CPF_2725"/>
<dbReference type="eggNOG" id="COG0081">
    <property type="taxonomic scope" value="Bacteria"/>
</dbReference>
<dbReference type="HOGENOM" id="CLU_062853_0_0_9"/>
<dbReference type="Proteomes" id="UP000001823">
    <property type="component" value="Chromosome"/>
</dbReference>
<dbReference type="GO" id="GO:0015934">
    <property type="term" value="C:large ribosomal subunit"/>
    <property type="evidence" value="ECO:0007669"/>
    <property type="project" value="InterPro"/>
</dbReference>
<dbReference type="GO" id="GO:0019843">
    <property type="term" value="F:rRNA binding"/>
    <property type="evidence" value="ECO:0007669"/>
    <property type="project" value="UniProtKB-UniRule"/>
</dbReference>
<dbReference type="GO" id="GO:0003735">
    <property type="term" value="F:structural constituent of ribosome"/>
    <property type="evidence" value="ECO:0007669"/>
    <property type="project" value="InterPro"/>
</dbReference>
<dbReference type="GO" id="GO:0000049">
    <property type="term" value="F:tRNA binding"/>
    <property type="evidence" value="ECO:0007669"/>
    <property type="project" value="UniProtKB-KW"/>
</dbReference>
<dbReference type="GO" id="GO:0006417">
    <property type="term" value="P:regulation of translation"/>
    <property type="evidence" value="ECO:0007669"/>
    <property type="project" value="UniProtKB-KW"/>
</dbReference>
<dbReference type="GO" id="GO:0006412">
    <property type="term" value="P:translation"/>
    <property type="evidence" value="ECO:0007669"/>
    <property type="project" value="UniProtKB-UniRule"/>
</dbReference>
<dbReference type="CDD" id="cd00403">
    <property type="entry name" value="Ribosomal_L1"/>
    <property type="match status" value="1"/>
</dbReference>
<dbReference type="FunFam" id="3.40.50.790:FF:000001">
    <property type="entry name" value="50S ribosomal protein L1"/>
    <property type="match status" value="1"/>
</dbReference>
<dbReference type="Gene3D" id="3.30.190.20">
    <property type="match status" value="1"/>
</dbReference>
<dbReference type="Gene3D" id="3.40.50.790">
    <property type="match status" value="1"/>
</dbReference>
<dbReference type="HAMAP" id="MF_01318_B">
    <property type="entry name" value="Ribosomal_uL1_B"/>
    <property type="match status" value="1"/>
</dbReference>
<dbReference type="InterPro" id="IPR005878">
    <property type="entry name" value="Ribosom_uL1_bac-type"/>
</dbReference>
<dbReference type="InterPro" id="IPR002143">
    <property type="entry name" value="Ribosomal_uL1"/>
</dbReference>
<dbReference type="InterPro" id="IPR023674">
    <property type="entry name" value="Ribosomal_uL1-like"/>
</dbReference>
<dbReference type="InterPro" id="IPR028364">
    <property type="entry name" value="Ribosomal_uL1/biogenesis"/>
</dbReference>
<dbReference type="InterPro" id="IPR016095">
    <property type="entry name" value="Ribosomal_uL1_3-a/b-sand"/>
</dbReference>
<dbReference type="InterPro" id="IPR023673">
    <property type="entry name" value="Ribosomal_uL1_CS"/>
</dbReference>
<dbReference type="NCBIfam" id="TIGR01169">
    <property type="entry name" value="rplA_bact"/>
    <property type="match status" value="1"/>
</dbReference>
<dbReference type="PANTHER" id="PTHR36427">
    <property type="entry name" value="54S RIBOSOMAL PROTEIN L1, MITOCHONDRIAL"/>
    <property type="match status" value="1"/>
</dbReference>
<dbReference type="PANTHER" id="PTHR36427:SF3">
    <property type="entry name" value="LARGE RIBOSOMAL SUBUNIT PROTEIN UL1M"/>
    <property type="match status" value="1"/>
</dbReference>
<dbReference type="Pfam" id="PF00687">
    <property type="entry name" value="Ribosomal_L1"/>
    <property type="match status" value="1"/>
</dbReference>
<dbReference type="PIRSF" id="PIRSF002155">
    <property type="entry name" value="Ribosomal_L1"/>
    <property type="match status" value="1"/>
</dbReference>
<dbReference type="SUPFAM" id="SSF56808">
    <property type="entry name" value="Ribosomal protein L1"/>
    <property type="match status" value="1"/>
</dbReference>
<dbReference type="PROSITE" id="PS01199">
    <property type="entry name" value="RIBOSOMAL_L1"/>
    <property type="match status" value="1"/>
</dbReference>
<gene>
    <name evidence="1" type="primary">rplA</name>
    <name type="ordered locus">CPF_2725</name>
</gene>
<organism>
    <name type="scientific">Clostridium perfringens (strain ATCC 13124 / DSM 756 / JCM 1290 / NCIMB 6125 / NCTC 8237 / Type A)</name>
    <dbReference type="NCBI Taxonomy" id="195103"/>
    <lineage>
        <taxon>Bacteria</taxon>
        <taxon>Bacillati</taxon>
        <taxon>Bacillota</taxon>
        <taxon>Clostridia</taxon>
        <taxon>Eubacteriales</taxon>
        <taxon>Clostridiaceae</taxon>
        <taxon>Clostridium</taxon>
    </lineage>
</organism>
<comment type="function">
    <text evidence="1">Binds directly to 23S rRNA. The L1 stalk is quite mobile in the ribosome, and is involved in E site tRNA release.</text>
</comment>
<comment type="function">
    <text evidence="1">Protein L1 is also a translational repressor protein, it controls the translation of the L11 operon by binding to its mRNA.</text>
</comment>
<comment type="subunit">
    <text evidence="1">Part of the 50S ribosomal subunit.</text>
</comment>
<comment type="similarity">
    <text evidence="1">Belongs to the universal ribosomal protein uL1 family.</text>
</comment>